<reference key="1">
    <citation type="journal article" date="1997" name="Genetics">
        <title>Saccharomyces cerevisiae PAC2 functions with CIN1, 2 and 4 in a pathway leading to normal microtubule stability.</title>
        <authorList>
            <person name="Hoyt M.A."/>
            <person name="Macke J.P."/>
            <person name="Roberts B.T."/>
            <person name="Geiser J.R."/>
        </authorList>
    </citation>
    <scope>NUCLEOTIDE SEQUENCE [GENOMIC DNA]</scope>
    <scope>CHARACTERIZATION</scope>
    <source>
        <strain>ATCC 204508 / S288c</strain>
    </source>
</reference>
<reference key="2">
    <citation type="journal article" date="1997" name="Nature">
        <title>The nucleotide sequence of Saccharomyces cerevisiae chromosome V.</title>
        <authorList>
            <person name="Dietrich F.S."/>
            <person name="Mulligan J.T."/>
            <person name="Hennessy K.M."/>
            <person name="Yelton M.A."/>
            <person name="Allen E."/>
            <person name="Araujo R."/>
            <person name="Aviles E."/>
            <person name="Berno A."/>
            <person name="Brennan T."/>
            <person name="Carpenter J."/>
            <person name="Chen E."/>
            <person name="Cherry J.M."/>
            <person name="Chung E."/>
            <person name="Duncan M."/>
            <person name="Guzman E."/>
            <person name="Hartzell G."/>
            <person name="Hunicke-Smith S."/>
            <person name="Hyman R.W."/>
            <person name="Kayser A."/>
            <person name="Komp C."/>
            <person name="Lashkari D."/>
            <person name="Lew H."/>
            <person name="Lin D."/>
            <person name="Mosedale D."/>
            <person name="Nakahara K."/>
            <person name="Namath A."/>
            <person name="Norgren R."/>
            <person name="Oefner P."/>
            <person name="Oh C."/>
            <person name="Petel F.X."/>
            <person name="Roberts D."/>
            <person name="Sehl P."/>
            <person name="Schramm S."/>
            <person name="Shogren T."/>
            <person name="Smith V."/>
            <person name="Taylor P."/>
            <person name="Wei Y."/>
            <person name="Botstein D."/>
            <person name="Davis R.W."/>
        </authorList>
    </citation>
    <scope>NUCLEOTIDE SEQUENCE [LARGE SCALE GENOMIC DNA]</scope>
    <source>
        <strain>ATCC 204508 / S288c</strain>
    </source>
</reference>
<reference key="3">
    <citation type="journal article" date="2014" name="G3 (Bethesda)">
        <title>The reference genome sequence of Saccharomyces cerevisiae: Then and now.</title>
        <authorList>
            <person name="Engel S.R."/>
            <person name="Dietrich F.S."/>
            <person name="Fisk D.G."/>
            <person name="Binkley G."/>
            <person name="Balakrishnan R."/>
            <person name="Costanzo M.C."/>
            <person name="Dwight S.S."/>
            <person name="Hitz B.C."/>
            <person name="Karra K."/>
            <person name="Nash R.S."/>
            <person name="Weng S."/>
            <person name="Wong E.D."/>
            <person name="Lloyd P."/>
            <person name="Skrzypek M.S."/>
            <person name="Miyasato S.R."/>
            <person name="Simison M."/>
            <person name="Cherry J.M."/>
        </authorList>
    </citation>
    <scope>GENOME REANNOTATION</scope>
    <source>
        <strain>ATCC 204508 / S288c</strain>
    </source>
</reference>
<reference key="4">
    <citation type="journal article" date="2003" name="Nature">
        <title>Global analysis of protein expression in yeast.</title>
        <authorList>
            <person name="Ghaemmaghami S."/>
            <person name="Huh W.-K."/>
            <person name="Bower K."/>
            <person name="Howson R.W."/>
            <person name="Belle A."/>
            <person name="Dephoure N."/>
            <person name="O'Shea E.K."/>
            <person name="Weissman J.S."/>
        </authorList>
    </citation>
    <scope>LEVEL OF PROTEIN EXPRESSION [LARGE SCALE ANALYSIS]</scope>
</reference>
<gene>
    <name type="primary">PAC2</name>
    <name type="ordered locus">YER007W</name>
</gene>
<sequence length="518" mass="59258">MTYEIGDRLKIGGYFCTIKFIGVIKPWPSVKAYGVEWDDHSRGKHSGTIDDIHYFDVQIPNSGSFLKESKIKSPGVRRITFYEALSEKYGGSSNNINDLSIGNKRVEGLGFDELNARNKNYKKLRKIALRDSDVAILFQNQDELNRVIQNCVNVKDLDLSLNLFTNINSLCEFIEPLKNLESLNISQNKLLSGWDNLKEYDLSHIKTLRLSSCGLSYKHIGKLLKSFRTLKMLDLSYNNLTSAGIQNFENEIPCTLEELNISGNNLISFPLFPKNLTLKGLNVSNNQISRAPSIAIYSVESLDITDNKFKERSLIDDLNKTFPSLKNIHLSGNEFNYNGNYINVEEQATFYEVLARFDRVMVLNGSICDVKTRREAEMFFVSKVMNNELSYDTNLPRWSSLIKSYEIDMSKLSFNNERETRQSLVLKIKIRAGKKPSSDLDYWVLPSFTVRYVKSVICRKLNFDILNVKLFHENSEGMINEIKYNFRPISDFNVVNGDIIHVSSPVNNKSIQKVNSPS</sequence>
<proteinExistence type="evidence at protein level"/>
<evidence type="ECO:0000255" key="1">
    <source>
        <dbReference type="PROSITE-ProRule" id="PRU00045"/>
    </source>
</evidence>
<evidence type="ECO:0000269" key="2">
    <source>
    </source>
</evidence>
<evidence type="ECO:0000305" key="3"/>
<dbReference type="EMBL" id="U16814">
    <property type="protein sequence ID" value="AAB00683.1"/>
    <property type="molecule type" value="Genomic_DNA"/>
</dbReference>
<dbReference type="EMBL" id="U18778">
    <property type="protein sequence ID" value="AAB64540.1"/>
    <property type="molecule type" value="Genomic_DNA"/>
</dbReference>
<dbReference type="EMBL" id="BK006939">
    <property type="protein sequence ID" value="DAA07657.1"/>
    <property type="molecule type" value="Genomic_DNA"/>
</dbReference>
<dbReference type="PIR" id="S50465">
    <property type="entry name" value="S50465"/>
</dbReference>
<dbReference type="RefSeq" id="NP_010922.1">
    <property type="nucleotide sequence ID" value="NM_001178898.1"/>
</dbReference>
<dbReference type="SMR" id="P39937"/>
<dbReference type="BioGRID" id="36737">
    <property type="interactions" value="116"/>
</dbReference>
<dbReference type="DIP" id="DIP-2342N"/>
<dbReference type="FunCoup" id="P39937">
    <property type="interactions" value="719"/>
</dbReference>
<dbReference type="IntAct" id="P39937">
    <property type="interactions" value="8"/>
</dbReference>
<dbReference type="MINT" id="P39937"/>
<dbReference type="STRING" id="4932.YER007W"/>
<dbReference type="GlyGen" id="P39937">
    <property type="glycosylation" value="3 sites, 1 O-linked glycan (3 sites)"/>
</dbReference>
<dbReference type="PaxDb" id="4932-YER007W"/>
<dbReference type="PeptideAtlas" id="P39937"/>
<dbReference type="EnsemblFungi" id="YER007W_mRNA">
    <property type="protein sequence ID" value="YER007W"/>
    <property type="gene ID" value="YER007W"/>
</dbReference>
<dbReference type="GeneID" id="856724"/>
<dbReference type="KEGG" id="sce:YER007W"/>
<dbReference type="AGR" id="SGD:S000000809"/>
<dbReference type="SGD" id="S000000809">
    <property type="gene designation" value="PAC2"/>
</dbReference>
<dbReference type="VEuPathDB" id="FungiDB:YER007W"/>
<dbReference type="eggNOG" id="KOG3207">
    <property type="taxonomic scope" value="Eukaryota"/>
</dbReference>
<dbReference type="GeneTree" id="ENSGT00530000063405"/>
<dbReference type="HOGENOM" id="CLU_017716_5_1_1"/>
<dbReference type="InParanoid" id="P39937"/>
<dbReference type="OMA" id="SEESHMF"/>
<dbReference type="OrthoDB" id="5273213at2759"/>
<dbReference type="BioCyc" id="YEAST:G3O-30194-MONOMER"/>
<dbReference type="BioGRID-ORCS" id="856724">
    <property type="hits" value="0 hits in 10 CRISPR screens"/>
</dbReference>
<dbReference type="PRO" id="PR:P39937"/>
<dbReference type="Proteomes" id="UP000002311">
    <property type="component" value="Chromosome V"/>
</dbReference>
<dbReference type="RNAct" id="P39937">
    <property type="molecule type" value="protein"/>
</dbReference>
<dbReference type="GO" id="GO:0005737">
    <property type="term" value="C:cytoplasm"/>
    <property type="evidence" value="ECO:0000318"/>
    <property type="project" value="GO_Central"/>
</dbReference>
<dbReference type="GO" id="GO:0005874">
    <property type="term" value="C:microtubule"/>
    <property type="evidence" value="ECO:0007669"/>
    <property type="project" value="UniProtKB-KW"/>
</dbReference>
<dbReference type="GO" id="GO:0043014">
    <property type="term" value="F:alpha-tubulin binding"/>
    <property type="evidence" value="ECO:0000353"/>
    <property type="project" value="SGD"/>
</dbReference>
<dbReference type="GO" id="GO:0000226">
    <property type="term" value="P:microtubule cytoskeleton organization"/>
    <property type="evidence" value="ECO:0000318"/>
    <property type="project" value="GO_Central"/>
</dbReference>
<dbReference type="GO" id="GO:0007023">
    <property type="term" value="P:post-chaperonin tubulin folding pathway"/>
    <property type="evidence" value="ECO:0000318"/>
    <property type="project" value="GO_Central"/>
</dbReference>
<dbReference type="GO" id="GO:0006457">
    <property type="term" value="P:protein folding"/>
    <property type="evidence" value="ECO:0000316"/>
    <property type="project" value="SGD"/>
</dbReference>
<dbReference type="GO" id="GO:0007021">
    <property type="term" value="P:tubulin complex assembly"/>
    <property type="evidence" value="ECO:0000315"/>
    <property type="project" value="SGD"/>
</dbReference>
<dbReference type="FunFam" id="2.30.30.190:FF:000017">
    <property type="entry name" value="Pac2p"/>
    <property type="match status" value="1"/>
</dbReference>
<dbReference type="Gene3D" id="2.30.30.190">
    <property type="entry name" value="CAP Gly-rich-like domain"/>
    <property type="match status" value="1"/>
</dbReference>
<dbReference type="Gene3D" id="3.80.10.10">
    <property type="entry name" value="Ribonuclease Inhibitor"/>
    <property type="match status" value="2"/>
</dbReference>
<dbReference type="InterPro" id="IPR036859">
    <property type="entry name" value="CAP-Gly_dom_sf"/>
</dbReference>
<dbReference type="InterPro" id="IPR000938">
    <property type="entry name" value="CAP-Gly_domain"/>
</dbReference>
<dbReference type="InterPro" id="IPR001611">
    <property type="entry name" value="Leu-rich_rpt"/>
</dbReference>
<dbReference type="InterPro" id="IPR032675">
    <property type="entry name" value="LRR_dom_sf"/>
</dbReference>
<dbReference type="InterPro" id="IPR050836">
    <property type="entry name" value="SDS22/Internalin_LRR"/>
</dbReference>
<dbReference type="InterPro" id="IPR029071">
    <property type="entry name" value="Ubiquitin-like_domsf"/>
</dbReference>
<dbReference type="PANTHER" id="PTHR46652">
    <property type="entry name" value="LEUCINE-RICH REPEAT AND IQ DOMAIN-CONTAINING PROTEIN 1-RELATED"/>
    <property type="match status" value="1"/>
</dbReference>
<dbReference type="PANTHER" id="PTHR46652:SF3">
    <property type="entry name" value="LEUCINE-RICH REPEAT-CONTAINING PROTEIN 9"/>
    <property type="match status" value="1"/>
</dbReference>
<dbReference type="Pfam" id="PF01302">
    <property type="entry name" value="CAP_GLY"/>
    <property type="match status" value="1"/>
</dbReference>
<dbReference type="Pfam" id="PF13516">
    <property type="entry name" value="LRR_6"/>
    <property type="match status" value="2"/>
</dbReference>
<dbReference type="SMART" id="SM01052">
    <property type="entry name" value="CAP_GLY"/>
    <property type="match status" value="1"/>
</dbReference>
<dbReference type="SUPFAM" id="SSF74924">
    <property type="entry name" value="Cap-Gly domain"/>
    <property type="match status" value="1"/>
</dbReference>
<dbReference type="SUPFAM" id="SSF52047">
    <property type="entry name" value="RNI-like"/>
    <property type="match status" value="1"/>
</dbReference>
<dbReference type="SUPFAM" id="SSF54236">
    <property type="entry name" value="Ubiquitin-like"/>
    <property type="match status" value="1"/>
</dbReference>
<dbReference type="PROSITE" id="PS00845">
    <property type="entry name" value="CAP_GLY_1"/>
    <property type="match status" value="1"/>
</dbReference>
<dbReference type="PROSITE" id="PS50245">
    <property type="entry name" value="CAP_GLY_2"/>
    <property type="match status" value="1"/>
</dbReference>
<accession>P39937</accession>
<accession>D3DLQ3</accession>
<organism>
    <name type="scientific">Saccharomyces cerevisiae (strain ATCC 204508 / S288c)</name>
    <name type="common">Baker's yeast</name>
    <dbReference type="NCBI Taxonomy" id="559292"/>
    <lineage>
        <taxon>Eukaryota</taxon>
        <taxon>Fungi</taxon>
        <taxon>Dikarya</taxon>
        <taxon>Ascomycota</taxon>
        <taxon>Saccharomycotina</taxon>
        <taxon>Saccharomycetes</taxon>
        <taxon>Saccharomycetales</taxon>
        <taxon>Saccharomycetaceae</taxon>
        <taxon>Saccharomyces</taxon>
    </lineage>
</organism>
<feature type="chain" id="PRO_0000083526" description="Protein PAC2">
    <location>
        <begin position="1"/>
        <end position="518"/>
    </location>
</feature>
<feature type="domain" description="CAP-Gly" evidence="1">
    <location>
        <begin position="23"/>
        <end position="67"/>
    </location>
</feature>
<feature type="repeat" description="LRR 1">
    <location>
        <begin position="153"/>
        <end position="174"/>
    </location>
</feature>
<feature type="repeat" description="LRR 2">
    <location>
        <begin position="179"/>
        <end position="201"/>
    </location>
</feature>
<feature type="repeat" description="LRR 3">
    <location>
        <begin position="204"/>
        <end position="227"/>
    </location>
</feature>
<feature type="repeat" description="LRR 4">
    <location>
        <begin position="229"/>
        <end position="252"/>
    </location>
</feature>
<feature type="repeat" description="LRR 5">
    <location>
        <begin position="255"/>
        <end position="276"/>
    </location>
</feature>
<feature type="repeat" description="LRR 6">
    <location>
        <begin position="277"/>
        <end position="298"/>
    </location>
</feature>
<feature type="repeat" description="LRR 7">
    <location>
        <begin position="299"/>
        <end position="319"/>
    </location>
</feature>
<feature type="repeat" description="LRR 8">
    <location>
        <begin position="324"/>
        <end position="345"/>
    </location>
</feature>
<keyword id="KW-0143">Chaperone</keyword>
<keyword id="KW-0963">Cytoplasm</keyword>
<keyword id="KW-0206">Cytoskeleton</keyword>
<keyword id="KW-0433">Leucine-rich repeat</keyword>
<keyword id="KW-0493">Microtubule</keyword>
<keyword id="KW-1185">Reference proteome</keyword>
<keyword id="KW-0677">Repeat</keyword>
<comment type="function">
    <text>Required for viability in the absence of the kinesin-related CIN8 mitotic motor. Seems to be involved in the assembly of alpha-tubulin.</text>
</comment>
<comment type="interaction">
    <interactant intactId="EBI-12845">
        <id>P39937</id>
    </interactant>
    <interactant intactId="EBI-4665">
        <id>P40987</id>
        <label>CIN1</label>
    </interactant>
    <organismsDiffer>false</organismsDiffer>
    <experiments>2</experiments>
</comment>
<comment type="subcellular location">
    <subcellularLocation>
        <location evidence="3">Cytoplasm</location>
        <location evidence="3">Cytoskeleton</location>
    </subcellularLocation>
</comment>
<comment type="miscellaneous">
    <text evidence="2">Present with 2140 molecules/cell in log phase SD medium.</text>
</comment>
<protein>
    <recommendedName>
        <fullName>Protein PAC2</fullName>
    </recommendedName>
</protein>
<name>PAC2_YEAST</name>